<comment type="function">
    <text evidence="5 12 13">Seed storage protein.</text>
</comment>
<comment type="subunit">
    <text evidence="1 7">Homohexamer (By similarity). Each subunit is composed of an acidic and a basic chain derived from a single precursor and linked by a disulfide bond (PubMed:21718052).</text>
</comment>
<comment type="tissue specificity">
    <text evidence="7 8">Expressed in seeds (at protein level) (PubMed:21718052). Expressed in seeds (PubMed:28121438).</text>
</comment>
<comment type="developmental stage">
    <text evidence="7 8">Expressed during seed maturation (PubMed:21718052). Expressed during embryonic development including the water, gel, dough and mature nut stages in the nut cavity tissues including the contents of the central vacuole, endosperm, embryo, placenta, seed coat, ovary packing tissue, developing fruit and cotyledon lobes. Expression increases during the transition from water to gel stage, levels off or decreases slightly from the gel to dough stage and increases again from the dough to mature stage (PubMed:28121438).</text>
</comment>
<comment type="induction">
    <text evidence="8">Up-regulated during nut development.</text>
</comment>
<comment type="allergen">
    <text evidence="7">Causes an allergic reaction in human. Recombinant protein binds to IgE in 57% of the 28 patients tested allergic to pecan nuts. Acidic chain is more immunoreactive than the basic chain.</text>
</comment>
<comment type="similarity">
    <text evidence="5 11">Belongs to the 11S seed storage protein (globulins) family.</text>
</comment>
<sequence length="505" mass="58016">MAKPILLSIYLCLIIVALFNGCLAQSGGRQQHKFGQCQLNRLDALEPTNRIEAEAGVIESWDPNHQQLQCAGVAVVRRTIEPNGLLLPHYSNAPQLVYIARGRGITGVLFPGCPETFEESQRQSQQGQRREFQQDRHQKIRHFREGDIIAFPAGVAHWCYNDGSSPVVAIFLLDTHNNANQLDQNPRNFYLAGNPDDEFRPQGQQEYEQHRRQQQHQQRRGEHGEQQRDLGNNVFSGFDAEFLADAFNVDTETARRLQSENDHRGSIVRVEGRQLQVIRPRWSREEQEHEERKERERERESESERRQSRRGGRDDNGLEETICTLSLRENIGDPSRADIYTEEAGRISTVNSHNLPILRWLQLSAERGALYSDALYVPHWNLNAHSVVYALRGRAEVQVVDNFGQTVFDDELREGQLLTIPQNFAVVKRARDEGFEWVSFKTNENAMVSPLAGRTSAIRALPEEVLVNAFQIPREDARRLKFNRQESTLVRSRSRSSRSERRAEV</sequence>
<organism evidence="14">
    <name type="scientific">Carya illinoinensis</name>
    <name type="common">Pecan</name>
    <dbReference type="NCBI Taxonomy" id="32201"/>
    <lineage>
        <taxon>Eukaryota</taxon>
        <taxon>Viridiplantae</taxon>
        <taxon>Streptophyta</taxon>
        <taxon>Embryophyta</taxon>
        <taxon>Tracheophyta</taxon>
        <taxon>Spermatophyta</taxon>
        <taxon>Magnoliopsida</taxon>
        <taxon>eudicotyledons</taxon>
        <taxon>Gunneridae</taxon>
        <taxon>Pentapetalae</taxon>
        <taxon>rosids</taxon>
        <taxon>fabids</taxon>
        <taxon>Fagales</taxon>
        <taxon>Juglandaceae</taxon>
        <taxon>Carya</taxon>
    </lineage>
</organism>
<proteinExistence type="evidence at protein level"/>
<keyword id="KW-0020">Allergen</keyword>
<keyword id="KW-0903">Direct protein sequencing</keyword>
<keyword id="KW-1015">Disulfide bond</keyword>
<keyword id="KW-0389">IgE-binding protein</keyword>
<keyword id="KW-0708">Seed storage protein</keyword>
<keyword id="KW-0732">Signal</keyword>
<keyword id="KW-0758">Storage protein</keyword>
<protein>
    <recommendedName>
        <fullName evidence="11">11S globulin seed storage protein 1</fullName>
    </recommendedName>
    <alternativeName>
        <fullName evidence="9">11S legumin</fullName>
    </alternativeName>
    <alternativeName>
        <fullName evidence="9 10">Allergen Car i 4</fullName>
    </alternativeName>
    <alternativeName>
        <fullName evidence="9">Pec11S-1</fullName>
    </alternativeName>
    <allergenName evidence="11">Car i 4.0101</allergenName>
    <component>
        <recommendedName>
            <fullName evidence="11">11S globulin seed storage protein 1 acidic chain</fullName>
        </recommendedName>
    </component>
    <component>
        <recommendedName>
            <fullName evidence="11">11S globulin seed storage protein 1 basic chain</fullName>
        </recommendedName>
    </component>
</protein>
<dbReference type="EMBL" id="EU113051">
    <property type="protein sequence ID" value="ABW86978.1"/>
    <property type="molecule type" value="mRNA"/>
</dbReference>
<dbReference type="SMR" id="B5KVH4"/>
<dbReference type="Allergome" id="8299">
    <property type="allergen name" value="Car i 4"/>
</dbReference>
<dbReference type="Allergome" id="8300">
    <property type="allergen name" value="Car i 4.0101"/>
</dbReference>
<dbReference type="GO" id="GO:0019863">
    <property type="term" value="F:IgE binding"/>
    <property type="evidence" value="ECO:0007669"/>
    <property type="project" value="UniProtKB-KW"/>
</dbReference>
<dbReference type="GO" id="GO:0045735">
    <property type="term" value="F:nutrient reservoir activity"/>
    <property type="evidence" value="ECO:0000305"/>
    <property type="project" value="UniProtKB"/>
</dbReference>
<dbReference type="GO" id="GO:0048316">
    <property type="term" value="P:seed development"/>
    <property type="evidence" value="ECO:0000270"/>
    <property type="project" value="UniProtKB"/>
</dbReference>
<dbReference type="GO" id="GO:0010431">
    <property type="term" value="P:seed maturation"/>
    <property type="evidence" value="ECO:0000270"/>
    <property type="project" value="UniProtKB"/>
</dbReference>
<dbReference type="CDD" id="cd02243">
    <property type="entry name" value="cupin_11S_legumin_C"/>
    <property type="match status" value="1"/>
</dbReference>
<dbReference type="CDD" id="cd02242">
    <property type="entry name" value="cupin_11S_legumin_N"/>
    <property type="match status" value="1"/>
</dbReference>
<dbReference type="FunFam" id="2.60.120.10:FF:000073">
    <property type="entry name" value="Glycinin G1"/>
    <property type="match status" value="1"/>
</dbReference>
<dbReference type="FunFam" id="2.60.120.10:FF:000124">
    <property type="entry name" value="Glycinin G5"/>
    <property type="match status" value="1"/>
</dbReference>
<dbReference type="Gene3D" id="2.60.120.10">
    <property type="entry name" value="Jelly Rolls"/>
    <property type="match status" value="2"/>
</dbReference>
<dbReference type="InterPro" id="IPR022379">
    <property type="entry name" value="11S_seedstore_CS"/>
</dbReference>
<dbReference type="InterPro" id="IPR006044">
    <property type="entry name" value="11S_seedstore_pln"/>
</dbReference>
<dbReference type="InterPro" id="IPR006045">
    <property type="entry name" value="Cupin_1"/>
</dbReference>
<dbReference type="InterPro" id="IPR014710">
    <property type="entry name" value="RmlC-like_jellyroll"/>
</dbReference>
<dbReference type="InterPro" id="IPR011051">
    <property type="entry name" value="RmlC_Cupin_sf"/>
</dbReference>
<dbReference type="InterPro" id="IPR050253">
    <property type="entry name" value="Seed_Storage-Functional"/>
</dbReference>
<dbReference type="PANTHER" id="PTHR31189:SF35">
    <property type="entry name" value="12S SEED STORAGE PROTEIN CRB"/>
    <property type="match status" value="1"/>
</dbReference>
<dbReference type="PANTHER" id="PTHR31189">
    <property type="entry name" value="OS03G0336100 PROTEIN-RELATED"/>
    <property type="match status" value="1"/>
</dbReference>
<dbReference type="Pfam" id="PF00190">
    <property type="entry name" value="Cupin_1"/>
    <property type="match status" value="2"/>
</dbReference>
<dbReference type="PRINTS" id="PR00439">
    <property type="entry name" value="11SGLOBULIN"/>
</dbReference>
<dbReference type="SMART" id="SM00835">
    <property type="entry name" value="Cupin_1"/>
    <property type="match status" value="2"/>
</dbReference>
<dbReference type="SUPFAM" id="SSF51182">
    <property type="entry name" value="RmlC-like cupins"/>
    <property type="match status" value="1"/>
</dbReference>
<dbReference type="PROSITE" id="PS00305">
    <property type="entry name" value="11S_SEED_STORAGE"/>
    <property type="match status" value="1"/>
</dbReference>
<evidence type="ECO:0000250" key="1">
    <source>
        <dbReference type="UniProtKB" id="A0A1L6K371"/>
    </source>
</evidence>
<evidence type="ECO:0000250" key="2">
    <source>
        <dbReference type="UniProtKB" id="P04776"/>
    </source>
</evidence>
<evidence type="ECO:0000250" key="3">
    <source>
        <dbReference type="UniProtKB" id="Q2TPW5"/>
    </source>
</evidence>
<evidence type="ECO:0000255" key="4"/>
<evidence type="ECO:0000255" key="5">
    <source>
        <dbReference type="RuleBase" id="RU003681"/>
    </source>
</evidence>
<evidence type="ECO:0000256" key="6">
    <source>
        <dbReference type="SAM" id="MobiDB-lite"/>
    </source>
</evidence>
<evidence type="ECO:0000269" key="7">
    <source>
    </source>
</evidence>
<evidence type="ECO:0000269" key="8">
    <source>
    </source>
</evidence>
<evidence type="ECO:0000303" key="9">
    <source>
    </source>
</evidence>
<evidence type="ECO:0000303" key="10">
    <source>
    </source>
</evidence>
<evidence type="ECO:0000305" key="11"/>
<evidence type="ECO:0000305" key="12">
    <source>
    </source>
</evidence>
<evidence type="ECO:0000305" key="13">
    <source>
    </source>
</evidence>
<evidence type="ECO:0000312" key="14">
    <source>
        <dbReference type="EMBL" id="ABW86978.1"/>
    </source>
</evidence>
<accession>B5KVH4</accession>
<name>11S1_CARIL</name>
<reference evidence="14" key="1">
    <citation type="journal article" date="2011" name="J. Agric. Food Chem.">
        <title>Cloning and characterization of an 11S legumin, Car i 4, a major allergen in pecan.</title>
        <authorList>
            <person name="Sharma G.M."/>
            <person name="Irsigler A."/>
            <person name="Dhanarajan P."/>
            <person name="Ayuso R."/>
            <person name="Bardina L."/>
            <person name="Sampson H.A."/>
            <person name="Roux K.H."/>
            <person name="Sathe S.K."/>
        </authorList>
    </citation>
    <scope>NUCLEOTIDE SEQUENCE [MRNA]</scope>
    <scope>PROTEIN SEQUENCE OF 30-41; 79-101; 102-122; 104-122; 188-212; 257-269; 274-281; 368-392 AND 460-474</scope>
    <scope>3D-STRUCTURE MODELING</scope>
    <scope>SUBUNIT</scope>
    <scope>TISSUE SPECIFICITY</scope>
    <scope>DEVELOPMENTAL STAGE</scope>
    <scope>IDENTIFICATION BY MASS SPECTROMETRY</scope>
    <scope>ALLERGEN</scope>
    <scope>REGIONS</scope>
</reference>
<reference key="2">
    <citation type="journal article" date="2017" name="J. Agric. Food Chem.">
        <title>RNA-Seq Analysis of Developing Pecan (Carya illinoinensis) Embryos Reveals Parallel Expression Patterns among Allergen and Lipid Metabolism Genes.</title>
        <authorList>
            <person name="Mattison C.P."/>
            <person name="Rai R."/>
            <person name="Settlage R.E."/>
            <person name="Hinchliffe D.J."/>
            <person name="Madison C."/>
            <person name="Bland J.M."/>
            <person name="Brashear S."/>
            <person name="Graham C.J."/>
            <person name="Tarver M.R."/>
            <person name="Florane C."/>
            <person name="Bechtel P.J."/>
        </authorList>
    </citation>
    <scope>TISSUE SPECIFICITY</scope>
    <scope>DEVELOPMENTAL STAGE</scope>
    <scope>INDUCTION</scope>
</reference>
<feature type="signal peptide" evidence="4">
    <location>
        <begin position="1"/>
        <end position="24"/>
    </location>
</feature>
<feature type="chain" id="PRO_0000448540" description="11S globulin seed storage protein 1 acidic chain" evidence="3 4">
    <location>
        <begin position="25"/>
        <end position="316"/>
    </location>
</feature>
<feature type="chain" id="PRO_0000448541" description="11S globulin seed storage protein 1 basic chain" evidence="3">
    <location>
        <begin position="317"/>
        <end position="505"/>
    </location>
</feature>
<feature type="domain" description="Cupin type-1 1" evidence="4">
    <location>
        <begin position="42"/>
        <end position="255"/>
    </location>
</feature>
<feature type="domain" description="Cupin type-1 2" evidence="4">
    <location>
        <begin position="329"/>
        <end position="478"/>
    </location>
</feature>
<feature type="region of interest" description="IgE-binding" evidence="7">
    <location>
        <begin position="118"/>
        <end position="132"/>
    </location>
</feature>
<feature type="region of interest" description="Disordered" evidence="6">
    <location>
        <begin position="193"/>
        <end position="232"/>
    </location>
</feature>
<feature type="region of interest" description="IgE-binding" evidence="7">
    <location>
        <begin position="208"/>
        <end position="219"/>
    </location>
</feature>
<feature type="region of interest" description="IgE-binding" evidence="7">
    <location>
        <begin position="238"/>
        <end position="249"/>
    </location>
</feature>
<feature type="region of interest" description="Disordered" evidence="6">
    <location>
        <begin position="282"/>
        <end position="318"/>
    </location>
</feature>
<feature type="short sequence motif" description="NGXEET; peptidase recognition motif" evidence="3">
    <location>
        <begin position="316"/>
        <end position="321"/>
    </location>
</feature>
<feature type="compositionally biased region" description="Basic and acidic residues" evidence="6">
    <location>
        <begin position="219"/>
        <end position="228"/>
    </location>
</feature>
<feature type="compositionally biased region" description="Basic and acidic residues" evidence="6">
    <location>
        <begin position="282"/>
        <end position="316"/>
    </location>
</feature>
<feature type="disulfide bond" evidence="2">
    <location>
        <begin position="37"/>
        <end position="70"/>
    </location>
</feature>
<feature type="disulfide bond" description="Interchain (between acidic and basic chains)" evidence="2">
    <location>
        <begin position="113"/>
        <end position="323"/>
    </location>
</feature>